<dbReference type="EC" id="6.1.1.17" evidence="1"/>
<dbReference type="EMBL" id="CP000934">
    <property type="protein sequence ID" value="ACE84018.1"/>
    <property type="molecule type" value="Genomic_DNA"/>
</dbReference>
<dbReference type="RefSeq" id="WP_012487014.1">
    <property type="nucleotide sequence ID" value="NC_010995.1"/>
</dbReference>
<dbReference type="SMR" id="B3PD15"/>
<dbReference type="STRING" id="498211.CJA_1379"/>
<dbReference type="KEGG" id="cja:CJA_1379"/>
<dbReference type="eggNOG" id="COG0008">
    <property type="taxonomic scope" value="Bacteria"/>
</dbReference>
<dbReference type="HOGENOM" id="CLU_015768_6_3_6"/>
<dbReference type="OrthoDB" id="9807503at2"/>
<dbReference type="Proteomes" id="UP000001036">
    <property type="component" value="Chromosome"/>
</dbReference>
<dbReference type="GO" id="GO:0005829">
    <property type="term" value="C:cytosol"/>
    <property type="evidence" value="ECO:0007669"/>
    <property type="project" value="TreeGrafter"/>
</dbReference>
<dbReference type="GO" id="GO:0005524">
    <property type="term" value="F:ATP binding"/>
    <property type="evidence" value="ECO:0007669"/>
    <property type="project" value="UniProtKB-UniRule"/>
</dbReference>
<dbReference type="GO" id="GO:0004818">
    <property type="term" value="F:glutamate-tRNA ligase activity"/>
    <property type="evidence" value="ECO:0007669"/>
    <property type="project" value="UniProtKB-UniRule"/>
</dbReference>
<dbReference type="GO" id="GO:0000049">
    <property type="term" value="F:tRNA binding"/>
    <property type="evidence" value="ECO:0007669"/>
    <property type="project" value="InterPro"/>
</dbReference>
<dbReference type="GO" id="GO:0008270">
    <property type="term" value="F:zinc ion binding"/>
    <property type="evidence" value="ECO:0007669"/>
    <property type="project" value="InterPro"/>
</dbReference>
<dbReference type="GO" id="GO:0006424">
    <property type="term" value="P:glutamyl-tRNA aminoacylation"/>
    <property type="evidence" value="ECO:0007669"/>
    <property type="project" value="UniProtKB-UniRule"/>
</dbReference>
<dbReference type="CDD" id="cd00808">
    <property type="entry name" value="GluRS_core"/>
    <property type="match status" value="1"/>
</dbReference>
<dbReference type="FunFam" id="3.40.50.620:FF:000045">
    <property type="entry name" value="Glutamate--tRNA ligase, mitochondrial"/>
    <property type="match status" value="1"/>
</dbReference>
<dbReference type="Gene3D" id="1.10.10.350">
    <property type="match status" value="1"/>
</dbReference>
<dbReference type="Gene3D" id="3.40.50.620">
    <property type="entry name" value="HUPs"/>
    <property type="match status" value="1"/>
</dbReference>
<dbReference type="HAMAP" id="MF_00022">
    <property type="entry name" value="Glu_tRNA_synth_type1"/>
    <property type="match status" value="1"/>
</dbReference>
<dbReference type="InterPro" id="IPR045462">
    <property type="entry name" value="aa-tRNA-synth_I_cd-bd"/>
</dbReference>
<dbReference type="InterPro" id="IPR020751">
    <property type="entry name" value="aa-tRNA-synth_I_codon-bd_sub2"/>
</dbReference>
<dbReference type="InterPro" id="IPR001412">
    <property type="entry name" value="aa-tRNA-synth_I_CS"/>
</dbReference>
<dbReference type="InterPro" id="IPR008925">
    <property type="entry name" value="aa_tRNA-synth_I_cd-bd_sf"/>
</dbReference>
<dbReference type="InterPro" id="IPR004527">
    <property type="entry name" value="Glu-tRNA-ligase_bac/mito"/>
</dbReference>
<dbReference type="InterPro" id="IPR000924">
    <property type="entry name" value="Glu/Gln-tRNA-synth"/>
</dbReference>
<dbReference type="InterPro" id="IPR020058">
    <property type="entry name" value="Glu/Gln-tRNA-synth_Ib_cat-dom"/>
</dbReference>
<dbReference type="InterPro" id="IPR049940">
    <property type="entry name" value="GluQ/Sye"/>
</dbReference>
<dbReference type="InterPro" id="IPR033910">
    <property type="entry name" value="GluRS_core"/>
</dbReference>
<dbReference type="InterPro" id="IPR014729">
    <property type="entry name" value="Rossmann-like_a/b/a_fold"/>
</dbReference>
<dbReference type="NCBIfam" id="TIGR00464">
    <property type="entry name" value="gltX_bact"/>
    <property type="match status" value="1"/>
</dbReference>
<dbReference type="PANTHER" id="PTHR43311">
    <property type="entry name" value="GLUTAMATE--TRNA LIGASE"/>
    <property type="match status" value="1"/>
</dbReference>
<dbReference type="PANTHER" id="PTHR43311:SF2">
    <property type="entry name" value="GLUTAMATE--TRNA LIGASE, MITOCHONDRIAL-RELATED"/>
    <property type="match status" value="1"/>
</dbReference>
<dbReference type="Pfam" id="PF19269">
    <property type="entry name" value="Anticodon_2"/>
    <property type="match status" value="1"/>
</dbReference>
<dbReference type="Pfam" id="PF00749">
    <property type="entry name" value="tRNA-synt_1c"/>
    <property type="match status" value="1"/>
</dbReference>
<dbReference type="PRINTS" id="PR00987">
    <property type="entry name" value="TRNASYNTHGLU"/>
</dbReference>
<dbReference type="SUPFAM" id="SSF48163">
    <property type="entry name" value="An anticodon-binding domain of class I aminoacyl-tRNA synthetases"/>
    <property type="match status" value="1"/>
</dbReference>
<dbReference type="SUPFAM" id="SSF52374">
    <property type="entry name" value="Nucleotidylyl transferase"/>
    <property type="match status" value="1"/>
</dbReference>
<dbReference type="PROSITE" id="PS00178">
    <property type="entry name" value="AA_TRNA_LIGASE_I"/>
    <property type="match status" value="1"/>
</dbReference>
<proteinExistence type="inferred from homology"/>
<protein>
    <recommendedName>
        <fullName evidence="1">Glutamate--tRNA ligase</fullName>
        <ecNumber evidence="1">6.1.1.17</ecNumber>
    </recommendedName>
    <alternativeName>
        <fullName evidence="1">Glutamyl-tRNA synthetase</fullName>
        <shortName evidence="1">GluRS</shortName>
    </alternativeName>
</protein>
<feature type="chain" id="PRO_1000090061" description="Glutamate--tRNA ligase">
    <location>
        <begin position="1"/>
        <end position="504"/>
    </location>
</feature>
<feature type="short sequence motif" description="'HIGH' region" evidence="1">
    <location>
        <begin position="10"/>
        <end position="20"/>
    </location>
</feature>
<feature type="short sequence motif" description="'KMSKS' region" evidence="1">
    <location>
        <begin position="251"/>
        <end position="255"/>
    </location>
</feature>
<feature type="binding site" evidence="1">
    <location>
        <position position="254"/>
    </location>
    <ligand>
        <name>ATP</name>
        <dbReference type="ChEBI" id="CHEBI:30616"/>
    </ligand>
</feature>
<sequence length="504" mass="57495">MSEIRTRIAPSPTGDPHVGTAYIALFNLCFARQHGGKFLLRIEDTDQTRSTPESEQAILDSLRWLGLEWDEGPDVGGPHGPYRQSERMDIYGKYALELVEKGHAFYCFATAEELDEMRREQQARGETPRYDGRGLTLTSAEVQSRLDAGEPYVIRMKIPEEGVCEIDDMLRGKIEIEWSQVDMQVLLKADGMPTYHLANVVDDHLMQITHVIRGEEWINSAPKHLKLYEYFGWRAPVLCHLPLLRNPDKSKLSKRKNPTSILYYKRMGYLPEAMLNYLGRMGWSMPDEREKFTLVEMQEHFDLLRVSLGGPIFDVEKLSWLNSLWIRENFTIEQLAQRLHDWALNKDMLLQALPHAQSRMTTLSDFAPLAGFLVSGMMPVTEASFASNKLPVEQQKEFLQFALWRLEALRTWERDTLFAELKTLAEQMGLKIKDAIAPVFVAIAGSTASFPVVDSMQIIGPDMSRARIRHAINALGGFGKNKQKDLEKVFAKLSEQGEEPAVNH</sequence>
<name>SYE_CELJU</name>
<comment type="function">
    <text evidence="1">Catalyzes the attachment of glutamate to tRNA(Glu) in a two-step reaction: glutamate is first activated by ATP to form Glu-AMP and then transferred to the acceptor end of tRNA(Glu).</text>
</comment>
<comment type="catalytic activity">
    <reaction evidence="1">
        <text>tRNA(Glu) + L-glutamate + ATP = L-glutamyl-tRNA(Glu) + AMP + diphosphate</text>
        <dbReference type="Rhea" id="RHEA:23540"/>
        <dbReference type="Rhea" id="RHEA-COMP:9663"/>
        <dbReference type="Rhea" id="RHEA-COMP:9680"/>
        <dbReference type="ChEBI" id="CHEBI:29985"/>
        <dbReference type="ChEBI" id="CHEBI:30616"/>
        <dbReference type="ChEBI" id="CHEBI:33019"/>
        <dbReference type="ChEBI" id="CHEBI:78442"/>
        <dbReference type="ChEBI" id="CHEBI:78520"/>
        <dbReference type="ChEBI" id="CHEBI:456215"/>
        <dbReference type="EC" id="6.1.1.17"/>
    </reaction>
</comment>
<comment type="subunit">
    <text evidence="1">Monomer.</text>
</comment>
<comment type="subcellular location">
    <subcellularLocation>
        <location evidence="1">Cytoplasm</location>
    </subcellularLocation>
</comment>
<comment type="similarity">
    <text evidence="1">Belongs to the class-I aminoacyl-tRNA synthetase family. Glutamate--tRNA ligase type 1 subfamily.</text>
</comment>
<organism>
    <name type="scientific">Cellvibrio japonicus (strain Ueda107)</name>
    <name type="common">Pseudomonas fluorescens subsp. cellulosa</name>
    <dbReference type="NCBI Taxonomy" id="498211"/>
    <lineage>
        <taxon>Bacteria</taxon>
        <taxon>Pseudomonadati</taxon>
        <taxon>Pseudomonadota</taxon>
        <taxon>Gammaproteobacteria</taxon>
        <taxon>Cellvibrionales</taxon>
        <taxon>Cellvibrionaceae</taxon>
        <taxon>Cellvibrio</taxon>
    </lineage>
</organism>
<accession>B3PD15</accession>
<keyword id="KW-0030">Aminoacyl-tRNA synthetase</keyword>
<keyword id="KW-0067">ATP-binding</keyword>
<keyword id="KW-0963">Cytoplasm</keyword>
<keyword id="KW-0436">Ligase</keyword>
<keyword id="KW-0547">Nucleotide-binding</keyword>
<keyword id="KW-0648">Protein biosynthesis</keyword>
<keyword id="KW-1185">Reference proteome</keyword>
<evidence type="ECO:0000255" key="1">
    <source>
        <dbReference type="HAMAP-Rule" id="MF_00022"/>
    </source>
</evidence>
<reference key="1">
    <citation type="journal article" date="2008" name="J. Bacteriol.">
        <title>Insights into plant cell wall degradation from the genome sequence of the soil bacterium Cellvibrio japonicus.</title>
        <authorList>
            <person name="DeBoy R.T."/>
            <person name="Mongodin E.F."/>
            <person name="Fouts D.E."/>
            <person name="Tailford L.E."/>
            <person name="Khouri H."/>
            <person name="Emerson J.B."/>
            <person name="Mohamoud Y."/>
            <person name="Watkins K."/>
            <person name="Henrissat B."/>
            <person name="Gilbert H.J."/>
            <person name="Nelson K.E."/>
        </authorList>
    </citation>
    <scope>NUCLEOTIDE SEQUENCE [LARGE SCALE GENOMIC DNA]</scope>
    <source>
        <strain>Ueda107</strain>
    </source>
</reference>
<gene>
    <name evidence="1" type="primary">gltX</name>
    <name type="ordered locus">CJA_1379</name>
</gene>